<organism>
    <name type="scientific">Rhodopseudomonas palustris (strain ATCC BAA-98 / CGA009)</name>
    <dbReference type="NCBI Taxonomy" id="258594"/>
    <lineage>
        <taxon>Bacteria</taxon>
        <taxon>Pseudomonadati</taxon>
        <taxon>Pseudomonadota</taxon>
        <taxon>Alphaproteobacteria</taxon>
        <taxon>Hyphomicrobiales</taxon>
        <taxon>Nitrobacteraceae</taxon>
        <taxon>Rhodopseudomonas</taxon>
    </lineage>
</organism>
<proteinExistence type="evidence at protein level"/>
<accession>Q6N4V8</accession>
<name>RL17_RHOPA</name>
<comment type="subunit">
    <text evidence="1">Part of the 50S ribosomal subunit. Contacts protein L32.</text>
</comment>
<comment type="PTM">
    <text>May be methylated thrice, on undetermined residues.</text>
</comment>
<comment type="mass spectrometry"/>
<comment type="similarity">
    <text evidence="1">Belongs to the bacterial ribosomal protein bL17 family.</text>
</comment>
<keyword id="KW-0687">Ribonucleoprotein</keyword>
<keyword id="KW-0689">Ribosomal protein</keyword>
<feature type="chain" id="PRO_0000224136" description="Large ribosomal subunit protein bL17">
    <location>
        <begin position="1"/>
        <end position="139"/>
    </location>
</feature>
<feature type="region of interest" description="Disordered" evidence="2">
    <location>
        <begin position="120"/>
        <end position="139"/>
    </location>
</feature>
<protein>
    <recommendedName>
        <fullName evidence="1">Large ribosomal subunit protein bL17</fullName>
    </recommendedName>
    <alternativeName>
        <fullName evidence="4">50S ribosomal protein L17</fullName>
    </alternativeName>
    <alternativeName>
        <fullName>RRP-L17</fullName>
    </alternativeName>
</protein>
<sequence>MKHGKVHRKLNRTAEHRKAMFANMCAALIKHEQIVTTLPKAKELRPIVEKLVTLGKKGGLDKRRQAIAEMRDIEQVKKLFDVLAPRYKDRNGGYTRIIKAGFRYGDNAAMAVIEFVDRDEDAKGRDSGPTQDNSEAEAA</sequence>
<dbReference type="EMBL" id="BX572603">
    <property type="protein sequence ID" value="CAE28666.1"/>
    <property type="molecule type" value="Genomic_DNA"/>
</dbReference>
<dbReference type="RefSeq" id="WP_011158770.1">
    <property type="nucleotide sequence ID" value="NZ_CP116810.1"/>
</dbReference>
<dbReference type="SMR" id="Q6N4V8"/>
<dbReference type="IntAct" id="Q6N4V8">
    <property type="interactions" value="1"/>
</dbReference>
<dbReference type="STRING" id="258594.RPA3225"/>
<dbReference type="GeneID" id="66894311"/>
<dbReference type="eggNOG" id="COG0203">
    <property type="taxonomic scope" value="Bacteria"/>
</dbReference>
<dbReference type="HOGENOM" id="CLU_074407_2_0_5"/>
<dbReference type="PhylomeDB" id="Q6N4V8"/>
<dbReference type="GO" id="GO:0022625">
    <property type="term" value="C:cytosolic large ribosomal subunit"/>
    <property type="evidence" value="ECO:0007669"/>
    <property type="project" value="TreeGrafter"/>
</dbReference>
<dbReference type="GO" id="GO:0003735">
    <property type="term" value="F:structural constituent of ribosome"/>
    <property type="evidence" value="ECO:0007669"/>
    <property type="project" value="InterPro"/>
</dbReference>
<dbReference type="GO" id="GO:0006412">
    <property type="term" value="P:translation"/>
    <property type="evidence" value="ECO:0007669"/>
    <property type="project" value="UniProtKB-UniRule"/>
</dbReference>
<dbReference type="FunFam" id="3.90.1030.10:FF:000001">
    <property type="entry name" value="50S ribosomal protein L17"/>
    <property type="match status" value="1"/>
</dbReference>
<dbReference type="Gene3D" id="3.90.1030.10">
    <property type="entry name" value="Ribosomal protein L17"/>
    <property type="match status" value="1"/>
</dbReference>
<dbReference type="HAMAP" id="MF_01368">
    <property type="entry name" value="Ribosomal_bL17"/>
    <property type="match status" value="1"/>
</dbReference>
<dbReference type="InterPro" id="IPR000456">
    <property type="entry name" value="Ribosomal_bL17"/>
</dbReference>
<dbReference type="InterPro" id="IPR047859">
    <property type="entry name" value="Ribosomal_bL17_CS"/>
</dbReference>
<dbReference type="InterPro" id="IPR036373">
    <property type="entry name" value="Ribosomal_bL17_sf"/>
</dbReference>
<dbReference type="NCBIfam" id="TIGR00059">
    <property type="entry name" value="L17"/>
    <property type="match status" value="1"/>
</dbReference>
<dbReference type="PANTHER" id="PTHR14413:SF16">
    <property type="entry name" value="LARGE RIBOSOMAL SUBUNIT PROTEIN BL17M"/>
    <property type="match status" value="1"/>
</dbReference>
<dbReference type="PANTHER" id="PTHR14413">
    <property type="entry name" value="RIBOSOMAL PROTEIN L17"/>
    <property type="match status" value="1"/>
</dbReference>
<dbReference type="Pfam" id="PF01196">
    <property type="entry name" value="Ribosomal_L17"/>
    <property type="match status" value="1"/>
</dbReference>
<dbReference type="SUPFAM" id="SSF64263">
    <property type="entry name" value="Prokaryotic ribosomal protein L17"/>
    <property type="match status" value="1"/>
</dbReference>
<dbReference type="PROSITE" id="PS01167">
    <property type="entry name" value="RIBOSOMAL_L17"/>
    <property type="match status" value="1"/>
</dbReference>
<gene>
    <name evidence="1" type="primary">rplQ</name>
    <name type="ordered locus">RPA3225</name>
</gene>
<reference key="1">
    <citation type="journal article" date="2004" name="Nat. Biotechnol.">
        <title>Complete genome sequence of the metabolically versatile photosynthetic bacterium Rhodopseudomonas palustris.</title>
        <authorList>
            <person name="Larimer F.W."/>
            <person name="Chain P."/>
            <person name="Hauser L."/>
            <person name="Lamerdin J.E."/>
            <person name="Malfatti S."/>
            <person name="Do L."/>
            <person name="Land M.L."/>
            <person name="Pelletier D.A."/>
            <person name="Beatty J.T."/>
            <person name="Lang A.S."/>
            <person name="Tabita F.R."/>
            <person name="Gibson J.L."/>
            <person name="Hanson T.E."/>
            <person name="Bobst C."/>
            <person name="Torres y Torres J.L."/>
            <person name="Peres C."/>
            <person name="Harrison F.H."/>
            <person name="Gibson J."/>
            <person name="Harwood C.S."/>
        </authorList>
    </citation>
    <scope>NUCLEOTIDE SEQUENCE [LARGE SCALE GENOMIC DNA]</scope>
    <source>
        <strain>ATCC BAA-98 / CGA009</strain>
    </source>
</reference>
<reference key="2">
    <citation type="journal article" date="2004" name="J. Proteome Res.">
        <title>Characterization of the 70S ribosome from Rhodopseudomonas palustris using an integrated 'top-down' and 'bottom-up' mass spectrometric approach.</title>
        <authorList>
            <person name="Strader M.B."/>
            <person name="VerBerkmoes N.C."/>
            <person name="Tabb D.L."/>
            <person name="Connelly H.M."/>
            <person name="Barton J.W."/>
            <person name="Bruce B.D."/>
            <person name="Pelletier D.A."/>
            <person name="Davison B.H."/>
            <person name="Hettich R.L."/>
            <person name="Larimer F.W."/>
            <person name="Hurst G.B."/>
        </authorList>
    </citation>
    <scope>MASS SPECTROMETRY</scope>
    <source>
        <strain>ATCC BAA-98 / CGA009</strain>
    </source>
</reference>
<evidence type="ECO:0000255" key="1">
    <source>
        <dbReference type="HAMAP-Rule" id="MF_01368"/>
    </source>
</evidence>
<evidence type="ECO:0000256" key="2">
    <source>
        <dbReference type="SAM" id="MobiDB-lite"/>
    </source>
</evidence>
<evidence type="ECO:0000269" key="3">
    <source>
    </source>
</evidence>
<evidence type="ECO:0000305" key="4"/>